<protein>
    <recommendedName>
        <fullName>Sex-determining region Y protein</fullName>
    </recommendedName>
    <alternativeName>
        <fullName>Testis-determining factor</fullName>
    </alternativeName>
</protein>
<keyword id="KW-0007">Acetylation</keyword>
<keyword id="KW-0010">Activator</keyword>
<keyword id="KW-0112">Calmodulin-binding</keyword>
<keyword id="KW-0963">Cytoplasm</keyword>
<keyword id="KW-0221">Differentiation</keyword>
<keyword id="KW-0238">DNA-binding</keyword>
<keyword id="KW-0539">Nucleus</keyword>
<keyword id="KW-0678">Repressor</keyword>
<keyword id="KW-0726">Sexual differentiation</keyword>
<keyword id="KW-0804">Transcription</keyword>
<keyword id="KW-0805">Transcription regulation</keyword>
<accession>Q7JGF9</accession>
<gene>
    <name type="primary">SRY</name>
    <name type="synonym">TDF</name>
</gene>
<comment type="function">
    <text evidence="1 2">Transcriptional regulator that controls a genetic switch in male development. It is necessary and sufficient for initiating male sex determination by directing the development of supporting cell precursors (pre-Sertoli cells) as Sertoli rather than granulosa cells. Involved in different aspects of gene regulation including promoter activation or repression. Binds to the DNA consensus sequence 5'-[AT]AACAA[AT]-3'. SRY HMG box recognizes DNA by partial intercalation in the minor groove and promotes DNA bending. Also involved in pre-mRNA splicing (By similarity). In male adult brain involved in the maintenance of motor functions of dopaminergic neurons (By similarity).</text>
</comment>
<comment type="subunit">
    <text evidence="2">Interacts with CALM, EP300, HDAC3, KPNB1, ZNF208 isoform KRAB-O, PARP1, SLC9A3R2 and WT1. The interaction with EP300 modulates its DNA-binding activity. The interaction with KPNB1 is sensitive to dissociation by Ran in the GTP-bound form. Interaction with PARP1 impaired its DNA-binding activity.</text>
</comment>
<comment type="subcellular location">
    <subcellularLocation>
        <location evidence="2">Nucleus speckle</location>
    </subcellularLocation>
    <subcellularLocation>
        <location evidence="2">Cytoplasm</location>
    </subcellularLocation>
    <subcellularLocation>
        <location evidence="2">Nucleus</location>
    </subcellularLocation>
</comment>
<comment type="PTM">
    <text evidence="2">Acetylation of Lys-130 contributes to its nuclear localization and enhances its interaction with KPNB1. Deacetylated by HDAC3.</text>
</comment>
<comment type="similarity">
    <text evidence="5">Belongs to the SRY family.</text>
</comment>
<comment type="online information" name="Protein Spotlight">
    <link uri="https://www.proteinspotlight.org/back_issues/080"/>
    <text>The tenuous nature of sex - Issue 80 of March 2007</text>
</comment>
<feature type="chain" id="PRO_0000048644" description="Sex-determining region Y protein">
    <location>
        <begin position="1"/>
        <end position="229"/>
    </location>
</feature>
<feature type="DNA-binding region" description="HMG box" evidence="3">
    <location>
        <begin position="54"/>
        <end position="122"/>
    </location>
</feature>
<feature type="region of interest" description="Disordered" evidence="4">
    <location>
        <begin position="32"/>
        <end position="52"/>
    </location>
</feature>
<feature type="compositionally biased region" description="Basic and acidic residues" evidence="4">
    <location>
        <begin position="39"/>
        <end position="52"/>
    </location>
</feature>
<proteinExistence type="inferred from homology"/>
<name>SRY_BOSGF</name>
<sequence>MFRVLNDDVYSPAVVQQQTTLAFRKDSSLCTDSHSANDQCERGEHVRESSQDHVKRPMNAFIVWSRERRRKVALENPKMKNSDISKQLGYEWKRLTDAEKRPFFEEAQRLLAIHRDKYPGYKYRPRRRAKRPQKSLPADSSILCNPMHVETLHPFTYRDGCAKTTYSQMESQLSRSQSVIITNSLLQKEHHSSWTSLGHNKVTLATRISADFPFNKSLEPGLSCAYFQY</sequence>
<reference key="1">
    <citation type="journal article" date="2004" name="Mol. Biol. Evol.">
        <title>Maternal and paternal lineages in cross-breeding bovine species. Has wisent a hybrid origin?</title>
        <authorList>
            <person name="Verkaar E.L.C."/>
            <person name="Nijman I.J."/>
            <person name="Beeke M."/>
            <person name="Hanekamp E."/>
            <person name="Lenstra J.A."/>
        </authorList>
    </citation>
    <scope>NUCLEOTIDE SEQUENCE [GENOMIC DNA]</scope>
</reference>
<dbReference type="EMBL" id="AY079143">
    <property type="protein sequence ID" value="AAL86544.1"/>
    <property type="molecule type" value="Genomic_DNA"/>
</dbReference>
<dbReference type="SMR" id="Q7JGF9"/>
<dbReference type="GO" id="GO:0005737">
    <property type="term" value="C:cytoplasm"/>
    <property type="evidence" value="ECO:0007669"/>
    <property type="project" value="UniProtKB-SubCell"/>
</dbReference>
<dbReference type="GO" id="GO:0016607">
    <property type="term" value="C:nuclear speck"/>
    <property type="evidence" value="ECO:0007669"/>
    <property type="project" value="UniProtKB-SubCell"/>
</dbReference>
<dbReference type="GO" id="GO:0005634">
    <property type="term" value="C:nucleus"/>
    <property type="evidence" value="ECO:0000250"/>
    <property type="project" value="UniProtKB"/>
</dbReference>
<dbReference type="GO" id="GO:0005516">
    <property type="term" value="F:calmodulin binding"/>
    <property type="evidence" value="ECO:0007669"/>
    <property type="project" value="UniProtKB-KW"/>
</dbReference>
<dbReference type="GO" id="GO:0001228">
    <property type="term" value="F:DNA-binding transcription activator activity, RNA polymerase II-specific"/>
    <property type="evidence" value="ECO:0007669"/>
    <property type="project" value="TreeGrafter"/>
</dbReference>
<dbReference type="GO" id="GO:0000978">
    <property type="term" value="F:RNA polymerase II cis-regulatory region sequence-specific DNA binding"/>
    <property type="evidence" value="ECO:0007669"/>
    <property type="project" value="TreeGrafter"/>
</dbReference>
<dbReference type="GO" id="GO:0030154">
    <property type="term" value="P:cell differentiation"/>
    <property type="evidence" value="ECO:0007669"/>
    <property type="project" value="UniProtKB-KW"/>
</dbReference>
<dbReference type="GO" id="GO:0030238">
    <property type="term" value="P:male sex determination"/>
    <property type="evidence" value="ECO:0007669"/>
    <property type="project" value="InterPro"/>
</dbReference>
<dbReference type="GO" id="GO:0007548">
    <property type="term" value="P:sex differentiation"/>
    <property type="evidence" value="ECO:0007669"/>
    <property type="project" value="UniProtKB-KW"/>
</dbReference>
<dbReference type="CDD" id="cd22034">
    <property type="entry name" value="HMG-box_SoxA_SRY"/>
    <property type="match status" value="1"/>
</dbReference>
<dbReference type="FunFam" id="1.10.30.10:FF:000002">
    <property type="entry name" value="transcription factor Sox-2"/>
    <property type="match status" value="1"/>
</dbReference>
<dbReference type="Gene3D" id="1.10.30.10">
    <property type="entry name" value="High mobility group box domain"/>
    <property type="match status" value="1"/>
</dbReference>
<dbReference type="InterPro" id="IPR009071">
    <property type="entry name" value="HMG_box_dom"/>
</dbReference>
<dbReference type="InterPro" id="IPR036910">
    <property type="entry name" value="HMG_box_dom_sf"/>
</dbReference>
<dbReference type="InterPro" id="IPR017253">
    <property type="entry name" value="SRY"/>
</dbReference>
<dbReference type="InterPro" id="IPR050140">
    <property type="entry name" value="SRY-related_HMG-box_TF-like"/>
</dbReference>
<dbReference type="PANTHER" id="PTHR10270:SF161">
    <property type="entry name" value="SEX-DETERMINING REGION Y PROTEIN"/>
    <property type="match status" value="1"/>
</dbReference>
<dbReference type="PANTHER" id="PTHR10270">
    <property type="entry name" value="SOX TRANSCRIPTION FACTOR"/>
    <property type="match status" value="1"/>
</dbReference>
<dbReference type="Pfam" id="PF00505">
    <property type="entry name" value="HMG_box"/>
    <property type="match status" value="1"/>
</dbReference>
<dbReference type="PIRSF" id="PIRSF037653">
    <property type="entry name" value="SRY"/>
    <property type="match status" value="1"/>
</dbReference>
<dbReference type="SMART" id="SM00398">
    <property type="entry name" value="HMG"/>
    <property type="match status" value="1"/>
</dbReference>
<dbReference type="SUPFAM" id="SSF47095">
    <property type="entry name" value="HMG-box"/>
    <property type="match status" value="1"/>
</dbReference>
<dbReference type="PROSITE" id="PS50118">
    <property type="entry name" value="HMG_BOX_2"/>
    <property type="match status" value="1"/>
</dbReference>
<organism>
    <name type="scientific">Bos gaurus frontalis</name>
    <name type="common">Domestic gayal</name>
    <name type="synonym">Bos frontalis</name>
    <dbReference type="NCBI Taxonomy" id="30520"/>
    <lineage>
        <taxon>Eukaryota</taxon>
        <taxon>Metazoa</taxon>
        <taxon>Chordata</taxon>
        <taxon>Craniata</taxon>
        <taxon>Vertebrata</taxon>
        <taxon>Euteleostomi</taxon>
        <taxon>Mammalia</taxon>
        <taxon>Eutheria</taxon>
        <taxon>Laurasiatheria</taxon>
        <taxon>Artiodactyla</taxon>
        <taxon>Ruminantia</taxon>
        <taxon>Pecora</taxon>
        <taxon>Bovidae</taxon>
        <taxon>Bovinae</taxon>
        <taxon>Bos</taxon>
    </lineage>
</organism>
<evidence type="ECO:0000250" key="1">
    <source>
        <dbReference type="UniProtKB" id="P36394"/>
    </source>
</evidence>
<evidence type="ECO:0000250" key="2">
    <source>
        <dbReference type="UniProtKB" id="Q05066"/>
    </source>
</evidence>
<evidence type="ECO:0000255" key="3">
    <source>
        <dbReference type="PROSITE-ProRule" id="PRU00267"/>
    </source>
</evidence>
<evidence type="ECO:0000256" key="4">
    <source>
        <dbReference type="SAM" id="MobiDB-lite"/>
    </source>
</evidence>
<evidence type="ECO:0000305" key="5"/>